<keyword id="KW-1185">Reference proteome</keyword>
<keyword id="KW-0687">Ribonucleoprotein</keyword>
<keyword id="KW-0689">Ribosomal protein</keyword>
<protein>
    <recommendedName>
        <fullName evidence="1">Small ribosomal subunit protein eS24</fullName>
    </recommendedName>
    <alternativeName>
        <fullName evidence="3">30S ribosomal protein S24e</fullName>
    </alternativeName>
</protein>
<organism>
    <name type="scientific">Halobacterium salinarum (strain ATCC 700922 / JCM 11081 / NRC-1)</name>
    <name type="common">Halobacterium halobium</name>
    <dbReference type="NCBI Taxonomy" id="64091"/>
    <lineage>
        <taxon>Archaea</taxon>
        <taxon>Methanobacteriati</taxon>
        <taxon>Methanobacteriota</taxon>
        <taxon>Stenosarchaea group</taxon>
        <taxon>Halobacteria</taxon>
        <taxon>Halobacteriales</taxon>
        <taxon>Halobacteriaceae</taxon>
        <taxon>Halobacterium</taxon>
        <taxon>Halobacterium salinarum NRC-34001</taxon>
    </lineage>
</organism>
<dbReference type="EMBL" id="AE004437">
    <property type="protein sequence ID" value="AAG20206.1"/>
    <property type="molecule type" value="Genomic_DNA"/>
</dbReference>
<dbReference type="PIR" id="B84355">
    <property type="entry name" value="B84355"/>
</dbReference>
<dbReference type="RefSeq" id="WP_010903507.1">
    <property type="nucleotide sequence ID" value="NC_002607.1"/>
</dbReference>
<dbReference type="SMR" id="Q9HNL4"/>
<dbReference type="FunCoup" id="Q9HNL4">
    <property type="interactions" value="52"/>
</dbReference>
<dbReference type="STRING" id="64091.VNG_2048G"/>
<dbReference type="PaxDb" id="64091-VNG_2048G"/>
<dbReference type="KEGG" id="hal:VNG_2048G"/>
<dbReference type="PATRIC" id="fig|64091.14.peg.1563"/>
<dbReference type="HOGENOM" id="CLU_107248_3_1_2"/>
<dbReference type="InParanoid" id="Q9HNL4"/>
<dbReference type="OrthoDB" id="27533at2157"/>
<dbReference type="PhylomeDB" id="Q9HNL4"/>
<dbReference type="Proteomes" id="UP000000554">
    <property type="component" value="Chromosome"/>
</dbReference>
<dbReference type="GO" id="GO:1990904">
    <property type="term" value="C:ribonucleoprotein complex"/>
    <property type="evidence" value="ECO:0007669"/>
    <property type="project" value="UniProtKB-KW"/>
</dbReference>
<dbReference type="GO" id="GO:0005840">
    <property type="term" value="C:ribosome"/>
    <property type="evidence" value="ECO:0007669"/>
    <property type="project" value="UniProtKB-KW"/>
</dbReference>
<dbReference type="GO" id="GO:0003735">
    <property type="term" value="F:structural constituent of ribosome"/>
    <property type="evidence" value="ECO:0007669"/>
    <property type="project" value="InterPro"/>
</dbReference>
<dbReference type="GO" id="GO:0006412">
    <property type="term" value="P:translation"/>
    <property type="evidence" value="ECO:0007669"/>
    <property type="project" value="UniProtKB-UniRule"/>
</dbReference>
<dbReference type="Gene3D" id="3.30.70.330">
    <property type="match status" value="1"/>
</dbReference>
<dbReference type="HAMAP" id="MF_00545">
    <property type="entry name" value="Ribosomal_eS24"/>
    <property type="match status" value="1"/>
</dbReference>
<dbReference type="InterPro" id="IPR012677">
    <property type="entry name" value="Nucleotide-bd_a/b_plait_sf"/>
</dbReference>
<dbReference type="InterPro" id="IPR001976">
    <property type="entry name" value="Ribosomal_eS24"/>
</dbReference>
<dbReference type="InterPro" id="IPR018098">
    <property type="entry name" value="Ribosomal_eS24_CS"/>
</dbReference>
<dbReference type="InterPro" id="IPR012678">
    <property type="entry name" value="Ribosomal_uL23/eL15/eS24_sf"/>
</dbReference>
<dbReference type="PANTHER" id="PTHR10496">
    <property type="entry name" value="40S RIBOSOMAL PROTEIN S24"/>
    <property type="match status" value="1"/>
</dbReference>
<dbReference type="Pfam" id="PF01282">
    <property type="entry name" value="Ribosomal_S24e"/>
    <property type="match status" value="1"/>
</dbReference>
<dbReference type="SUPFAM" id="SSF54189">
    <property type="entry name" value="Ribosomal proteins S24e, L23 and L15e"/>
    <property type="match status" value="1"/>
</dbReference>
<dbReference type="PROSITE" id="PS00529">
    <property type="entry name" value="RIBOSOMAL_S24E"/>
    <property type="match status" value="1"/>
</dbReference>
<name>RS24_HALSA</name>
<evidence type="ECO:0000255" key="1">
    <source>
        <dbReference type="HAMAP-Rule" id="MF_00545"/>
    </source>
</evidence>
<evidence type="ECO:0000256" key="2">
    <source>
        <dbReference type="SAM" id="MobiDB-lite"/>
    </source>
</evidence>
<evidence type="ECO:0000305" key="3"/>
<reference key="1">
    <citation type="journal article" date="2000" name="Proc. Natl. Acad. Sci. U.S.A.">
        <title>Genome sequence of Halobacterium species NRC-1.</title>
        <authorList>
            <person name="Ng W.V."/>
            <person name="Kennedy S.P."/>
            <person name="Mahairas G.G."/>
            <person name="Berquist B."/>
            <person name="Pan M."/>
            <person name="Shukla H.D."/>
            <person name="Lasky S.R."/>
            <person name="Baliga N.S."/>
            <person name="Thorsson V."/>
            <person name="Sbrogna J."/>
            <person name="Swartzell S."/>
            <person name="Weir D."/>
            <person name="Hall J."/>
            <person name="Dahl T.A."/>
            <person name="Welti R."/>
            <person name="Goo Y.A."/>
            <person name="Leithauser B."/>
            <person name="Keller K."/>
            <person name="Cruz R."/>
            <person name="Danson M.J."/>
            <person name="Hough D.W."/>
            <person name="Maddocks D.G."/>
            <person name="Jablonski P.E."/>
            <person name="Krebs M.P."/>
            <person name="Angevine C.M."/>
            <person name="Dale H."/>
            <person name="Isenbarger T.A."/>
            <person name="Peck R.F."/>
            <person name="Pohlschroder M."/>
            <person name="Spudich J.L."/>
            <person name="Jung K.-H."/>
            <person name="Alam M."/>
            <person name="Freitas T."/>
            <person name="Hou S."/>
            <person name="Daniels C.J."/>
            <person name="Dennis P.P."/>
            <person name="Omer A.D."/>
            <person name="Ebhardt H."/>
            <person name="Lowe T.M."/>
            <person name="Liang P."/>
            <person name="Riley M."/>
            <person name="Hood L."/>
            <person name="DasSarma S."/>
        </authorList>
    </citation>
    <scope>NUCLEOTIDE SEQUENCE [LARGE SCALE GENOMIC DNA]</scope>
    <source>
        <strain>ATCC 700922 / JCM 11081 / NRC-1</strain>
    </source>
</reference>
<feature type="chain" id="PRO_0000137641" description="Small ribosomal subunit protein eS24">
    <location>
        <begin position="1"/>
        <end position="102"/>
    </location>
</feature>
<feature type="region of interest" description="Disordered" evidence="2">
    <location>
        <begin position="70"/>
        <end position="102"/>
    </location>
</feature>
<feature type="compositionally biased region" description="Basic and acidic residues" evidence="2">
    <location>
        <begin position="79"/>
        <end position="93"/>
    </location>
</feature>
<comment type="similarity">
    <text evidence="1">Belongs to the eukaryotic ribosomal protein eS24 family.</text>
</comment>
<sequence length="102" mass="11496">MEIEILGQEDNPLLHRTDVQFKIVHDDATPSRLSVRDSLAAKLDKDSEEVVVHELDTKFGMRKTRGRAKVYDSPAQAAEVEHDHMLERNKIGADDADAEEAE</sequence>
<proteinExistence type="inferred from homology"/>
<accession>Q9HNL4</accession>
<gene>
    <name evidence="1" type="primary">rps24e</name>
    <name type="ordered locus">VNG_2048G</name>
</gene>